<dbReference type="EMBL" id="AL391753">
    <property type="protein sequence ID" value="CAC05844.1"/>
    <property type="molecule type" value="Genomic_DNA"/>
</dbReference>
<dbReference type="EMBL" id="AF386526">
    <property type="protein sequence ID" value="AAL72432.2"/>
    <property type="molecule type" value="Genomic_DNA"/>
</dbReference>
<dbReference type="RefSeq" id="NP_858330.2">
    <property type="nucleotide sequence ID" value="NC_004851.1"/>
</dbReference>
<dbReference type="RefSeq" id="WP_011114770.1">
    <property type="nucleotide sequence ID" value="NZ_WPGW01000167.1"/>
</dbReference>
<dbReference type="PaxDb" id="198214-CP0197"/>
<dbReference type="GeneID" id="3170831"/>
<dbReference type="KEGG" id="sfl:CP0197"/>
<dbReference type="HOGENOM" id="CLU_2259327_0_0_6"/>
<dbReference type="Proteomes" id="UP000001006">
    <property type="component" value="Plasmid pCP301"/>
</dbReference>
<proteinExistence type="predicted"/>
<protein>
    <recommendedName>
        <fullName>Uncharacterized protein YubC</fullName>
    </recommendedName>
</protein>
<name>YUBC_SHIFL</name>
<reference key="1">
    <citation type="journal article" date="2000" name="Mol. Microbiol.">
        <title>The virulence plasmid pWR100 and the repertoire of proteins secreted by the type III secretion apparatus of Shigella flexneri.</title>
        <authorList>
            <person name="Buchrieser C."/>
            <person name="Glaser P."/>
            <person name="Rusniok C."/>
            <person name="Nedjari H."/>
            <person name="d'Hauteville H."/>
            <person name="Kunst F."/>
            <person name="Sansonetti P.J."/>
            <person name="Parsot C."/>
        </authorList>
    </citation>
    <scope>NUCLEOTIDE SEQUENCE [GENOMIC DNA]</scope>
    <source>
        <strain>M90T / Serotype 5a</strain>
        <plasmid>pWR100</plasmid>
    </source>
</reference>
<reference key="2">
    <citation type="journal article" date="2002" name="Nucleic Acids Res.">
        <title>Genome sequence of Shigella flexneri 2a: insights into pathogenicity through comparison with genomes of Escherichia coli K12 and O157.</title>
        <authorList>
            <person name="Jin Q."/>
            <person name="Yuan Z."/>
            <person name="Xu J."/>
            <person name="Wang Y."/>
            <person name="Shen Y."/>
            <person name="Lu W."/>
            <person name="Wang J."/>
            <person name="Liu H."/>
            <person name="Yang J."/>
            <person name="Yang F."/>
            <person name="Zhang X."/>
            <person name="Zhang J."/>
            <person name="Yang G."/>
            <person name="Wu H."/>
            <person name="Qu D."/>
            <person name="Dong J."/>
            <person name="Sun L."/>
            <person name="Xue Y."/>
            <person name="Zhao A."/>
            <person name="Gao Y."/>
            <person name="Zhu J."/>
            <person name="Kan B."/>
            <person name="Ding K."/>
            <person name="Chen S."/>
            <person name="Cheng H."/>
            <person name="Yao Z."/>
            <person name="He B."/>
            <person name="Chen R."/>
            <person name="Ma D."/>
            <person name="Qiang B."/>
            <person name="Wen Y."/>
            <person name="Hou Y."/>
            <person name="Yu J."/>
        </authorList>
    </citation>
    <scope>NUCLEOTIDE SEQUENCE [LARGE SCALE GENOMIC DNA]</scope>
    <source>
        <strain>301 / Serotype 2a</strain>
        <plasmid>pCP301</plasmid>
    </source>
</reference>
<feature type="chain" id="PRO_0000263042" description="Uncharacterized protein YubC">
    <location>
        <begin position="1"/>
        <end position="103"/>
    </location>
</feature>
<feature type="sequence variant" description="In plasmid pWR100.">
    <original>V</original>
    <variation>A</variation>
    <location>
        <position position="58"/>
    </location>
</feature>
<sequence length="103" mass="12050">MKYDGDGRATARFFSDKGCRRAPLFTAPADAARHKRCLWSVSRVRRARDGRFYRSRLVSVTVYASPSPFSDERPSSRFRGITLLSKRRRLRYSTVGLTRYRKR</sequence>
<keyword id="KW-0614">Plasmid</keyword>
<keyword id="KW-1185">Reference proteome</keyword>
<organism>
    <name type="scientific">Shigella flexneri</name>
    <dbReference type="NCBI Taxonomy" id="623"/>
    <lineage>
        <taxon>Bacteria</taxon>
        <taxon>Pseudomonadati</taxon>
        <taxon>Pseudomonadota</taxon>
        <taxon>Gammaproteobacteria</taxon>
        <taxon>Enterobacterales</taxon>
        <taxon>Enterobacteriaceae</taxon>
        <taxon>Shigella</taxon>
    </lineage>
</organism>
<geneLocation type="plasmid">
    <name>pWR100</name>
</geneLocation>
<geneLocation type="plasmid">
    <name>pCP301</name>
</geneLocation>
<accession>Q8VSE0</accession>
<accession>Q9AJV5</accession>
<gene>
    <name type="primary">yubC</name>
    <name type="ordered locus">CP0197</name>
</gene>